<sequence>MEGPEIKFAEAVLDNGKYGTRTVRFEAGRLAQQAQGAVAAYLDEDTMLLSATSVGKHPKDNFDFFPLTIDVEERSYAAGKIPGSFFRREGRPSTEAILVCRLIDRPLRPSFITGLRNEVQVVITVLSIAPDEFYDSLAINAASASSMLSGIPFSGPIAGVRLALIGDQWVVFPKHSQLKEAVFDITVAGRVVTDSEGNEDVAIMMVEAEATEGAWDLIQGGATKPDEAIVAQGLEAAKPFIQQLVAAQASLAQQAAKPTVDYPVFLPYAQETYDAVSALALDELGTVYQTADKIERQDADDALKTRTKEAVAAKVEAGELPQSALTEFSAAYKSVTKTVVRGRILRDGVRMDGRGLADIRPLDAEVQVIPRVHGSAIFQRGETQILGVTTLNMLKMEQQIDSLSPITKKRYLHHYNFPPYSTGETGRVGSPKRREIGHGFLAERALVPVLPSREDFPYAIRQVSEALGSNGSTSMGSVCASTLSLLNAGVPLRAPVAGIAMGLVSDTVDGQVRYAALTDILGAEDALGDMDFKVAGTSEFVTAIQLDTKLDGIPTSVLDGALKQAKEARTAILGVLNQAIDGPDEMAPTAPRVISVNIPVDKIGELIGPKGKTINAIQDETGADISIEEDGTVYIGAVDGPSADAARAQVNAIANPTNPEVGESFLGTVVKIATFGAFVSLLPGKDGLLHISEVRKLAGGKRVENVEDVLGVGQKILVEITKIDDRGKLSLAPVLEETADQEGRDAASHGSEAPAEG</sequence>
<protein>
    <recommendedName>
        <fullName evidence="1">Polyribonucleotide nucleotidyltransferase</fullName>
        <ecNumber evidence="1">2.7.7.8</ecNumber>
    </recommendedName>
    <alternativeName>
        <fullName evidence="1">Polynucleotide phosphorylase</fullName>
        <shortName evidence="1">PNPase</shortName>
    </alternativeName>
</protein>
<reference key="1">
    <citation type="journal article" date="2008" name="J. Bacteriol.">
        <title>The genome sequence of the tomato-pathogenic actinomycete Clavibacter michiganensis subsp. michiganensis NCPPB382 reveals a large island involved in pathogenicity.</title>
        <authorList>
            <person name="Gartemann K.-H."/>
            <person name="Abt B."/>
            <person name="Bekel T."/>
            <person name="Burger A."/>
            <person name="Engemann J."/>
            <person name="Fluegel M."/>
            <person name="Gaigalat L."/>
            <person name="Goesmann A."/>
            <person name="Graefen I."/>
            <person name="Kalinowski J."/>
            <person name="Kaup O."/>
            <person name="Kirchner O."/>
            <person name="Krause L."/>
            <person name="Linke B."/>
            <person name="McHardy A."/>
            <person name="Meyer F."/>
            <person name="Pohle S."/>
            <person name="Rueckert C."/>
            <person name="Schneiker S."/>
            <person name="Zellermann E.-M."/>
            <person name="Puehler A."/>
            <person name="Eichenlaub R."/>
            <person name="Kaiser O."/>
            <person name="Bartels D."/>
        </authorList>
    </citation>
    <scope>NUCLEOTIDE SEQUENCE [LARGE SCALE GENOMIC DNA]</scope>
    <source>
        <strain>NCPPB 382</strain>
    </source>
</reference>
<organism>
    <name type="scientific">Clavibacter michiganensis subsp. michiganensis (strain NCPPB 382)</name>
    <dbReference type="NCBI Taxonomy" id="443906"/>
    <lineage>
        <taxon>Bacteria</taxon>
        <taxon>Bacillati</taxon>
        <taxon>Actinomycetota</taxon>
        <taxon>Actinomycetes</taxon>
        <taxon>Micrococcales</taxon>
        <taxon>Microbacteriaceae</taxon>
        <taxon>Clavibacter</taxon>
    </lineage>
</organism>
<feature type="chain" id="PRO_0000329592" description="Polyribonucleotide nucleotidyltransferase">
    <location>
        <begin position="1"/>
        <end position="757"/>
    </location>
</feature>
<feature type="domain" description="KH" evidence="1">
    <location>
        <begin position="591"/>
        <end position="650"/>
    </location>
</feature>
<feature type="domain" description="S1 motif" evidence="1">
    <location>
        <begin position="662"/>
        <end position="734"/>
    </location>
</feature>
<feature type="region of interest" description="Disordered" evidence="2">
    <location>
        <begin position="737"/>
        <end position="757"/>
    </location>
</feature>
<feature type="binding site" evidence="1">
    <location>
        <position position="525"/>
    </location>
    <ligand>
        <name>Mg(2+)</name>
        <dbReference type="ChEBI" id="CHEBI:18420"/>
    </ligand>
</feature>
<feature type="binding site" evidence="1">
    <location>
        <position position="531"/>
    </location>
    <ligand>
        <name>Mg(2+)</name>
        <dbReference type="ChEBI" id="CHEBI:18420"/>
    </ligand>
</feature>
<proteinExistence type="inferred from homology"/>
<gene>
    <name evidence="1" type="primary">pnp</name>
    <name type="ordered locus">CMM_2047</name>
</gene>
<keyword id="KW-0963">Cytoplasm</keyword>
<keyword id="KW-0460">Magnesium</keyword>
<keyword id="KW-0479">Metal-binding</keyword>
<keyword id="KW-0548">Nucleotidyltransferase</keyword>
<keyword id="KW-0694">RNA-binding</keyword>
<keyword id="KW-0808">Transferase</keyword>
<dbReference type="EC" id="2.7.7.8" evidence="1"/>
<dbReference type="EMBL" id="AM711867">
    <property type="protein sequence ID" value="CAN02110.1"/>
    <property type="molecule type" value="Genomic_DNA"/>
</dbReference>
<dbReference type="RefSeq" id="WP_012038734.1">
    <property type="nucleotide sequence ID" value="NC_009480.1"/>
</dbReference>
<dbReference type="SMR" id="A5CSN9"/>
<dbReference type="GeneID" id="92948041"/>
<dbReference type="KEGG" id="cmi:CMM_2047"/>
<dbReference type="eggNOG" id="COG1185">
    <property type="taxonomic scope" value="Bacteria"/>
</dbReference>
<dbReference type="HOGENOM" id="CLU_004217_2_2_11"/>
<dbReference type="OrthoDB" id="9804305at2"/>
<dbReference type="Proteomes" id="UP000001564">
    <property type="component" value="Chromosome"/>
</dbReference>
<dbReference type="GO" id="GO:0005829">
    <property type="term" value="C:cytosol"/>
    <property type="evidence" value="ECO:0007669"/>
    <property type="project" value="TreeGrafter"/>
</dbReference>
<dbReference type="GO" id="GO:0000175">
    <property type="term" value="F:3'-5'-RNA exonuclease activity"/>
    <property type="evidence" value="ECO:0007669"/>
    <property type="project" value="TreeGrafter"/>
</dbReference>
<dbReference type="GO" id="GO:0000287">
    <property type="term" value="F:magnesium ion binding"/>
    <property type="evidence" value="ECO:0007669"/>
    <property type="project" value="UniProtKB-UniRule"/>
</dbReference>
<dbReference type="GO" id="GO:0004654">
    <property type="term" value="F:polyribonucleotide nucleotidyltransferase activity"/>
    <property type="evidence" value="ECO:0007669"/>
    <property type="project" value="UniProtKB-UniRule"/>
</dbReference>
<dbReference type="GO" id="GO:0003723">
    <property type="term" value="F:RNA binding"/>
    <property type="evidence" value="ECO:0007669"/>
    <property type="project" value="UniProtKB-UniRule"/>
</dbReference>
<dbReference type="GO" id="GO:0006402">
    <property type="term" value="P:mRNA catabolic process"/>
    <property type="evidence" value="ECO:0007669"/>
    <property type="project" value="UniProtKB-UniRule"/>
</dbReference>
<dbReference type="GO" id="GO:0006396">
    <property type="term" value="P:RNA processing"/>
    <property type="evidence" value="ECO:0007669"/>
    <property type="project" value="InterPro"/>
</dbReference>
<dbReference type="CDD" id="cd02393">
    <property type="entry name" value="KH-I_PNPase"/>
    <property type="match status" value="1"/>
</dbReference>
<dbReference type="CDD" id="cd11364">
    <property type="entry name" value="RNase_PH_PNPase_2"/>
    <property type="match status" value="1"/>
</dbReference>
<dbReference type="CDD" id="cd04472">
    <property type="entry name" value="S1_PNPase"/>
    <property type="match status" value="1"/>
</dbReference>
<dbReference type="FunFam" id="2.40.50.140:FF:000069">
    <property type="entry name" value="Polyribonucleotide nucleotidyltransferase"/>
    <property type="match status" value="1"/>
</dbReference>
<dbReference type="FunFam" id="3.30.1370.10:FF:000001">
    <property type="entry name" value="Polyribonucleotide nucleotidyltransferase"/>
    <property type="match status" value="1"/>
</dbReference>
<dbReference type="FunFam" id="3.30.230.70:FF:000001">
    <property type="entry name" value="Polyribonucleotide nucleotidyltransferase"/>
    <property type="match status" value="1"/>
</dbReference>
<dbReference type="FunFam" id="3.30.230.70:FF:000002">
    <property type="entry name" value="Polyribonucleotide nucleotidyltransferase"/>
    <property type="match status" value="1"/>
</dbReference>
<dbReference type="Gene3D" id="3.30.230.70">
    <property type="entry name" value="GHMP Kinase, N-terminal domain"/>
    <property type="match status" value="2"/>
</dbReference>
<dbReference type="Gene3D" id="3.30.1370.10">
    <property type="entry name" value="K Homology domain, type 1"/>
    <property type="match status" value="1"/>
</dbReference>
<dbReference type="Gene3D" id="2.40.50.140">
    <property type="entry name" value="Nucleic acid-binding proteins"/>
    <property type="match status" value="1"/>
</dbReference>
<dbReference type="HAMAP" id="MF_01595">
    <property type="entry name" value="PNPase"/>
    <property type="match status" value="1"/>
</dbReference>
<dbReference type="InterPro" id="IPR001247">
    <property type="entry name" value="ExoRNase_PH_dom1"/>
</dbReference>
<dbReference type="InterPro" id="IPR015847">
    <property type="entry name" value="ExoRNase_PH_dom2"/>
</dbReference>
<dbReference type="InterPro" id="IPR036345">
    <property type="entry name" value="ExoRNase_PH_dom2_sf"/>
</dbReference>
<dbReference type="InterPro" id="IPR014069">
    <property type="entry name" value="GPSI/PNP"/>
</dbReference>
<dbReference type="InterPro" id="IPR004087">
    <property type="entry name" value="KH_dom"/>
</dbReference>
<dbReference type="InterPro" id="IPR004088">
    <property type="entry name" value="KH_dom_type_1"/>
</dbReference>
<dbReference type="InterPro" id="IPR036612">
    <property type="entry name" value="KH_dom_type_1_sf"/>
</dbReference>
<dbReference type="InterPro" id="IPR012340">
    <property type="entry name" value="NA-bd_OB-fold"/>
</dbReference>
<dbReference type="InterPro" id="IPR012162">
    <property type="entry name" value="PNPase"/>
</dbReference>
<dbReference type="InterPro" id="IPR027408">
    <property type="entry name" value="PNPase/RNase_PH_dom_sf"/>
</dbReference>
<dbReference type="InterPro" id="IPR015848">
    <property type="entry name" value="PNPase_PH_RNA-bd_bac/org-type"/>
</dbReference>
<dbReference type="InterPro" id="IPR036456">
    <property type="entry name" value="PNPase_PH_RNA-bd_sf"/>
</dbReference>
<dbReference type="InterPro" id="IPR020568">
    <property type="entry name" value="Ribosomal_Su5_D2-typ_SF"/>
</dbReference>
<dbReference type="InterPro" id="IPR003029">
    <property type="entry name" value="S1_domain"/>
</dbReference>
<dbReference type="NCBIfam" id="TIGR03591">
    <property type="entry name" value="polynuc_phos"/>
    <property type="match status" value="1"/>
</dbReference>
<dbReference type="NCBIfam" id="TIGR02696">
    <property type="entry name" value="pppGpp_PNP"/>
    <property type="match status" value="1"/>
</dbReference>
<dbReference type="NCBIfam" id="NF008805">
    <property type="entry name" value="PRK11824.1"/>
    <property type="match status" value="1"/>
</dbReference>
<dbReference type="PANTHER" id="PTHR11252">
    <property type="entry name" value="POLYRIBONUCLEOTIDE NUCLEOTIDYLTRANSFERASE"/>
    <property type="match status" value="1"/>
</dbReference>
<dbReference type="PANTHER" id="PTHR11252:SF0">
    <property type="entry name" value="POLYRIBONUCLEOTIDE NUCLEOTIDYLTRANSFERASE 1, MITOCHONDRIAL"/>
    <property type="match status" value="1"/>
</dbReference>
<dbReference type="Pfam" id="PF00013">
    <property type="entry name" value="KH_1"/>
    <property type="match status" value="1"/>
</dbReference>
<dbReference type="Pfam" id="PF03726">
    <property type="entry name" value="PNPase"/>
    <property type="match status" value="1"/>
</dbReference>
<dbReference type="Pfam" id="PF01138">
    <property type="entry name" value="RNase_PH"/>
    <property type="match status" value="2"/>
</dbReference>
<dbReference type="Pfam" id="PF03725">
    <property type="entry name" value="RNase_PH_C"/>
    <property type="match status" value="1"/>
</dbReference>
<dbReference type="Pfam" id="PF00575">
    <property type="entry name" value="S1"/>
    <property type="match status" value="1"/>
</dbReference>
<dbReference type="PIRSF" id="PIRSF005499">
    <property type="entry name" value="PNPase"/>
    <property type="match status" value="1"/>
</dbReference>
<dbReference type="SMART" id="SM00322">
    <property type="entry name" value="KH"/>
    <property type="match status" value="1"/>
</dbReference>
<dbReference type="SMART" id="SM00316">
    <property type="entry name" value="S1"/>
    <property type="match status" value="1"/>
</dbReference>
<dbReference type="SUPFAM" id="SSF54791">
    <property type="entry name" value="Eukaryotic type KH-domain (KH-domain type I)"/>
    <property type="match status" value="1"/>
</dbReference>
<dbReference type="SUPFAM" id="SSF46915">
    <property type="entry name" value="Polynucleotide phosphorylase/guanosine pentaphosphate synthase (PNPase/GPSI), domain 3"/>
    <property type="match status" value="1"/>
</dbReference>
<dbReference type="SUPFAM" id="SSF55666">
    <property type="entry name" value="Ribonuclease PH domain 2-like"/>
    <property type="match status" value="2"/>
</dbReference>
<dbReference type="SUPFAM" id="SSF54211">
    <property type="entry name" value="Ribosomal protein S5 domain 2-like"/>
    <property type="match status" value="2"/>
</dbReference>
<dbReference type="PROSITE" id="PS50084">
    <property type="entry name" value="KH_TYPE_1"/>
    <property type="match status" value="1"/>
</dbReference>
<dbReference type="PROSITE" id="PS50126">
    <property type="entry name" value="S1"/>
    <property type="match status" value="1"/>
</dbReference>
<evidence type="ECO:0000255" key="1">
    <source>
        <dbReference type="HAMAP-Rule" id="MF_01595"/>
    </source>
</evidence>
<evidence type="ECO:0000256" key="2">
    <source>
        <dbReference type="SAM" id="MobiDB-lite"/>
    </source>
</evidence>
<accession>A5CSN9</accession>
<comment type="function">
    <text evidence="1">Involved in mRNA degradation. Catalyzes the phosphorolysis of single-stranded polyribonucleotides processively in the 3'- to 5'-direction.</text>
</comment>
<comment type="catalytic activity">
    <reaction evidence="1">
        <text>RNA(n+1) + phosphate = RNA(n) + a ribonucleoside 5'-diphosphate</text>
        <dbReference type="Rhea" id="RHEA:22096"/>
        <dbReference type="Rhea" id="RHEA-COMP:14527"/>
        <dbReference type="Rhea" id="RHEA-COMP:17342"/>
        <dbReference type="ChEBI" id="CHEBI:43474"/>
        <dbReference type="ChEBI" id="CHEBI:57930"/>
        <dbReference type="ChEBI" id="CHEBI:140395"/>
        <dbReference type="EC" id="2.7.7.8"/>
    </reaction>
</comment>
<comment type="cofactor">
    <cofactor evidence="1">
        <name>Mg(2+)</name>
        <dbReference type="ChEBI" id="CHEBI:18420"/>
    </cofactor>
</comment>
<comment type="subcellular location">
    <subcellularLocation>
        <location evidence="1">Cytoplasm</location>
    </subcellularLocation>
</comment>
<comment type="similarity">
    <text evidence="1">Belongs to the polyribonucleotide nucleotidyltransferase family.</text>
</comment>
<name>PNP_CLAM3</name>